<gene>
    <name evidence="1" type="primary">rpmC</name>
    <name type="ordered locus">SAOUHSC_02504</name>
</gene>
<keyword id="KW-0002">3D-structure</keyword>
<keyword id="KW-1185">Reference proteome</keyword>
<keyword id="KW-0687">Ribonucleoprotein</keyword>
<keyword id="KW-0689">Ribosomal protein</keyword>
<proteinExistence type="evidence at protein level"/>
<reference key="1">
    <citation type="book" date="2006" name="Gram positive pathogens, 2nd edition">
        <title>The Staphylococcus aureus NCTC 8325 genome.</title>
        <editorList>
            <person name="Fischetti V."/>
            <person name="Novick R."/>
            <person name="Ferretti J."/>
            <person name="Portnoy D."/>
            <person name="Rood J."/>
        </editorList>
        <authorList>
            <person name="Gillaspy A.F."/>
            <person name="Worrell V."/>
            <person name="Orvis J."/>
            <person name="Roe B.A."/>
            <person name="Dyer D.W."/>
            <person name="Iandolo J.J."/>
        </authorList>
    </citation>
    <scope>NUCLEOTIDE SEQUENCE [LARGE SCALE GENOMIC DNA]</scope>
    <source>
        <strain>NCTC 8325 / PS 47</strain>
    </source>
</reference>
<evidence type="ECO:0000255" key="1">
    <source>
        <dbReference type="HAMAP-Rule" id="MF_00374"/>
    </source>
</evidence>
<evidence type="ECO:0000305" key="2"/>
<evidence type="ECO:0007829" key="3">
    <source>
        <dbReference type="PDB" id="7ASM"/>
    </source>
</evidence>
<dbReference type="EMBL" id="CP000253">
    <property type="protein sequence ID" value="ABD31522.1"/>
    <property type="molecule type" value="Genomic_DNA"/>
</dbReference>
<dbReference type="RefSeq" id="WP_000644737.1">
    <property type="nucleotide sequence ID" value="NZ_LS483365.1"/>
</dbReference>
<dbReference type="RefSeq" id="YP_500971.1">
    <property type="nucleotide sequence ID" value="NC_007795.1"/>
</dbReference>
<dbReference type="PDB" id="4WCE">
    <property type="method" value="X-ray"/>
    <property type="resolution" value="3.53 A"/>
    <property type="chains" value="V=1-69"/>
</dbReference>
<dbReference type="PDB" id="4WF9">
    <property type="method" value="X-ray"/>
    <property type="resolution" value="3.43 A"/>
    <property type="chains" value="V=1-69"/>
</dbReference>
<dbReference type="PDB" id="4WFA">
    <property type="method" value="X-ray"/>
    <property type="resolution" value="3.39 A"/>
    <property type="chains" value="V=1-69"/>
</dbReference>
<dbReference type="PDB" id="4WFB">
    <property type="method" value="X-ray"/>
    <property type="resolution" value="3.43 A"/>
    <property type="chains" value="V=1-69"/>
</dbReference>
<dbReference type="PDB" id="5HKV">
    <property type="method" value="X-ray"/>
    <property type="resolution" value="3.66 A"/>
    <property type="chains" value="V=1-69"/>
</dbReference>
<dbReference type="PDB" id="5HL7">
    <property type="method" value="X-ray"/>
    <property type="resolution" value="3.55 A"/>
    <property type="chains" value="V=1-69"/>
</dbReference>
<dbReference type="PDB" id="5LI0">
    <property type="method" value="EM"/>
    <property type="resolution" value="3.80 A"/>
    <property type="chains" value="1=2-66"/>
</dbReference>
<dbReference type="PDB" id="5ND8">
    <property type="method" value="EM"/>
    <property type="resolution" value="3.70 A"/>
    <property type="chains" value="1=1-69"/>
</dbReference>
<dbReference type="PDB" id="5ND9">
    <property type="method" value="EM"/>
    <property type="resolution" value="3.70 A"/>
    <property type="chains" value="1=1-69"/>
</dbReference>
<dbReference type="PDB" id="5NRG">
    <property type="method" value="X-ray"/>
    <property type="resolution" value="3.44 A"/>
    <property type="chains" value="V=1-69"/>
</dbReference>
<dbReference type="PDB" id="5TCU">
    <property type="method" value="EM"/>
    <property type="resolution" value="3.90 A"/>
    <property type="chains" value="LB=5-66"/>
</dbReference>
<dbReference type="PDB" id="6DDD">
    <property type="method" value="EM"/>
    <property type="resolution" value="3.10 A"/>
    <property type="chains" value="K=1-69"/>
</dbReference>
<dbReference type="PDB" id="6DDG">
    <property type="method" value="EM"/>
    <property type="resolution" value="3.10 A"/>
    <property type="chains" value="K=1-69"/>
</dbReference>
<dbReference type="PDB" id="6HMA">
    <property type="method" value="EM"/>
    <property type="resolution" value="2.65 A"/>
    <property type="chains" value="W=2-68"/>
</dbReference>
<dbReference type="PDB" id="6SJ6">
    <property type="method" value="EM"/>
    <property type="resolution" value="3.23 A"/>
    <property type="chains" value="1=1-69"/>
</dbReference>
<dbReference type="PDB" id="6WQN">
    <property type="method" value="EM"/>
    <property type="resolution" value="2.90 A"/>
    <property type="chains" value="K=2-69"/>
</dbReference>
<dbReference type="PDB" id="6WQQ">
    <property type="method" value="EM"/>
    <property type="resolution" value="3.10 A"/>
    <property type="chains" value="K=2-69"/>
</dbReference>
<dbReference type="PDB" id="6WRS">
    <property type="method" value="EM"/>
    <property type="resolution" value="3.20 A"/>
    <property type="chains" value="K=2-69"/>
</dbReference>
<dbReference type="PDB" id="6WRU">
    <property type="method" value="EM"/>
    <property type="resolution" value="3.10 A"/>
    <property type="chains" value="K=2-69"/>
</dbReference>
<dbReference type="PDB" id="6YEF">
    <property type="method" value="EM"/>
    <property type="resolution" value="3.20 A"/>
    <property type="chains" value="1=1-69"/>
</dbReference>
<dbReference type="PDB" id="7ASM">
    <property type="method" value="EM"/>
    <property type="resolution" value="2.48 A"/>
    <property type="chains" value="W=2-68"/>
</dbReference>
<dbReference type="PDB" id="7ASN">
    <property type="method" value="EM"/>
    <property type="resolution" value="2.73 A"/>
    <property type="chains" value="W=2-68"/>
</dbReference>
<dbReference type="PDB" id="7NHL">
    <property type="method" value="EM"/>
    <property type="resolution" value="3.10 A"/>
    <property type="chains" value="2=1-69"/>
</dbReference>
<dbReference type="PDB" id="7NHM">
    <property type="method" value="EM"/>
    <property type="resolution" value="3.10 A"/>
    <property type="chains" value="2=1-69"/>
</dbReference>
<dbReference type="PDB" id="7TTU">
    <property type="method" value="EM"/>
    <property type="resolution" value="3.00 A"/>
    <property type="chains" value="K=1-69"/>
</dbReference>
<dbReference type="PDB" id="7TTW">
    <property type="method" value="EM"/>
    <property type="resolution" value="2.90 A"/>
    <property type="chains" value="K=1-69"/>
</dbReference>
<dbReference type="PDB" id="8P2F">
    <property type="method" value="EM"/>
    <property type="resolution" value="2.44 A"/>
    <property type="chains" value="2=1-69"/>
</dbReference>
<dbReference type="PDB" id="8P2G">
    <property type="method" value="EM"/>
    <property type="resolution" value="2.02 A"/>
    <property type="chains" value="2=1-69"/>
</dbReference>
<dbReference type="PDB" id="8P2H">
    <property type="method" value="EM"/>
    <property type="resolution" value="2.49 A"/>
    <property type="chains" value="2=1-69"/>
</dbReference>
<dbReference type="PDBsum" id="4WCE"/>
<dbReference type="PDBsum" id="4WF9"/>
<dbReference type="PDBsum" id="4WFA"/>
<dbReference type="PDBsum" id="4WFB"/>
<dbReference type="PDBsum" id="5HKV"/>
<dbReference type="PDBsum" id="5HL7"/>
<dbReference type="PDBsum" id="5LI0"/>
<dbReference type="PDBsum" id="5ND8"/>
<dbReference type="PDBsum" id="5ND9"/>
<dbReference type="PDBsum" id="5NRG"/>
<dbReference type="PDBsum" id="5TCU"/>
<dbReference type="PDBsum" id="6DDD"/>
<dbReference type="PDBsum" id="6DDG"/>
<dbReference type="PDBsum" id="6HMA"/>
<dbReference type="PDBsum" id="6SJ6"/>
<dbReference type="PDBsum" id="6WQN"/>
<dbReference type="PDBsum" id="6WQQ"/>
<dbReference type="PDBsum" id="6WRS"/>
<dbReference type="PDBsum" id="6WRU"/>
<dbReference type="PDBsum" id="6YEF"/>
<dbReference type="PDBsum" id="7ASM"/>
<dbReference type="PDBsum" id="7ASN"/>
<dbReference type="PDBsum" id="7NHL"/>
<dbReference type="PDBsum" id="7NHM"/>
<dbReference type="PDBsum" id="7TTU"/>
<dbReference type="PDBsum" id="7TTW"/>
<dbReference type="PDBsum" id="8P2F"/>
<dbReference type="PDBsum" id="8P2G"/>
<dbReference type="PDBsum" id="8P2H"/>
<dbReference type="EMDB" id="EMD-10212"/>
<dbReference type="EMDB" id="EMD-10791"/>
<dbReference type="EMDB" id="EMD-12332"/>
<dbReference type="EMDB" id="EMD-17363"/>
<dbReference type="EMDB" id="EMD-17364"/>
<dbReference type="EMDB" id="EMD-17365"/>
<dbReference type="EMDB" id="EMD-3624"/>
<dbReference type="EMDB" id="EMD-3625"/>
<dbReference type="EMDB" id="EMD-4050"/>
<dbReference type="EMDB" id="EMD-8402"/>
<dbReference type="SMR" id="Q2FW14"/>
<dbReference type="IntAct" id="Q2FW14">
    <property type="interactions" value="1"/>
</dbReference>
<dbReference type="STRING" id="93061.SAOUHSC_02504"/>
<dbReference type="PaxDb" id="1280-SAXN108_2491"/>
<dbReference type="GeneID" id="3920880"/>
<dbReference type="GeneID" id="98346554"/>
<dbReference type="KEGG" id="sao:SAOUHSC_02504"/>
<dbReference type="PATRIC" id="fig|93061.5.peg.2259"/>
<dbReference type="eggNOG" id="COG0255">
    <property type="taxonomic scope" value="Bacteria"/>
</dbReference>
<dbReference type="HOGENOM" id="CLU_158491_5_2_9"/>
<dbReference type="OrthoDB" id="9815192at2"/>
<dbReference type="EvolutionaryTrace" id="Q2FW14"/>
<dbReference type="PRO" id="PR:Q2FW14"/>
<dbReference type="Proteomes" id="UP000008816">
    <property type="component" value="Chromosome"/>
</dbReference>
<dbReference type="GO" id="GO:0022625">
    <property type="term" value="C:cytosolic large ribosomal subunit"/>
    <property type="evidence" value="ECO:0000318"/>
    <property type="project" value="GO_Central"/>
</dbReference>
<dbReference type="GO" id="GO:0003735">
    <property type="term" value="F:structural constituent of ribosome"/>
    <property type="evidence" value="ECO:0007669"/>
    <property type="project" value="InterPro"/>
</dbReference>
<dbReference type="GO" id="GO:0006412">
    <property type="term" value="P:translation"/>
    <property type="evidence" value="ECO:0007669"/>
    <property type="project" value="UniProtKB-UniRule"/>
</dbReference>
<dbReference type="CDD" id="cd00427">
    <property type="entry name" value="Ribosomal_L29_HIP"/>
    <property type="match status" value="1"/>
</dbReference>
<dbReference type="FunFam" id="1.10.287.310:FF:000001">
    <property type="entry name" value="50S ribosomal protein L29"/>
    <property type="match status" value="1"/>
</dbReference>
<dbReference type="Gene3D" id="1.10.287.310">
    <property type="match status" value="1"/>
</dbReference>
<dbReference type="HAMAP" id="MF_00374">
    <property type="entry name" value="Ribosomal_uL29"/>
    <property type="match status" value="1"/>
</dbReference>
<dbReference type="InterPro" id="IPR050063">
    <property type="entry name" value="Ribosomal_protein_uL29"/>
</dbReference>
<dbReference type="InterPro" id="IPR001854">
    <property type="entry name" value="Ribosomal_uL29"/>
</dbReference>
<dbReference type="InterPro" id="IPR036049">
    <property type="entry name" value="Ribosomal_uL29_sf"/>
</dbReference>
<dbReference type="NCBIfam" id="TIGR00012">
    <property type="entry name" value="L29"/>
    <property type="match status" value="1"/>
</dbReference>
<dbReference type="PANTHER" id="PTHR10916">
    <property type="entry name" value="60S RIBOSOMAL PROTEIN L35/50S RIBOSOMAL PROTEIN L29"/>
    <property type="match status" value="1"/>
</dbReference>
<dbReference type="PANTHER" id="PTHR10916:SF0">
    <property type="entry name" value="LARGE RIBOSOMAL SUBUNIT PROTEIN UL29C"/>
    <property type="match status" value="1"/>
</dbReference>
<dbReference type="Pfam" id="PF00831">
    <property type="entry name" value="Ribosomal_L29"/>
    <property type="match status" value="1"/>
</dbReference>
<dbReference type="SUPFAM" id="SSF46561">
    <property type="entry name" value="Ribosomal protein L29 (L29p)"/>
    <property type="match status" value="1"/>
</dbReference>
<sequence length="69" mass="8090">MKAKEIRDLTTSEIEEQIKSSKEELFNLRFQLATGQLEETARIRTVRKTIARLKTVAREREIEQSKANQ</sequence>
<organism>
    <name type="scientific">Staphylococcus aureus (strain NCTC 8325 / PS 47)</name>
    <dbReference type="NCBI Taxonomy" id="93061"/>
    <lineage>
        <taxon>Bacteria</taxon>
        <taxon>Bacillati</taxon>
        <taxon>Bacillota</taxon>
        <taxon>Bacilli</taxon>
        <taxon>Bacillales</taxon>
        <taxon>Staphylococcaceae</taxon>
        <taxon>Staphylococcus</taxon>
    </lineage>
</organism>
<comment type="similarity">
    <text evidence="1">Belongs to the universal ribosomal protein uL29 family.</text>
</comment>
<protein>
    <recommendedName>
        <fullName evidence="1">Large ribosomal subunit protein uL29</fullName>
    </recommendedName>
    <alternativeName>
        <fullName evidence="2">50S ribosomal protein L29</fullName>
    </alternativeName>
</protein>
<feature type="chain" id="PRO_1000007617" description="Large ribosomal subunit protein uL29">
    <location>
        <begin position="1"/>
        <end position="69"/>
    </location>
</feature>
<feature type="helix" evidence="3">
    <location>
        <begin position="3"/>
        <end position="6"/>
    </location>
</feature>
<feature type="helix" evidence="3">
    <location>
        <begin position="11"/>
        <end position="34"/>
    </location>
</feature>
<feature type="helix" evidence="3">
    <location>
        <begin position="42"/>
        <end position="64"/>
    </location>
</feature>
<name>RL29_STAA8</name>
<accession>Q2FW14</accession>